<reference key="1">
    <citation type="journal article" date="2006" name="Proc. Natl. Acad. Sci. U.S.A.">
        <title>Comparative genomics of the lactic acid bacteria.</title>
        <authorList>
            <person name="Makarova K.S."/>
            <person name="Slesarev A."/>
            <person name="Wolf Y.I."/>
            <person name="Sorokin A."/>
            <person name="Mirkin B."/>
            <person name="Koonin E.V."/>
            <person name="Pavlov A."/>
            <person name="Pavlova N."/>
            <person name="Karamychev V."/>
            <person name="Polouchine N."/>
            <person name="Shakhova V."/>
            <person name="Grigoriev I."/>
            <person name="Lou Y."/>
            <person name="Rohksar D."/>
            <person name="Lucas S."/>
            <person name="Huang K."/>
            <person name="Goodstein D.M."/>
            <person name="Hawkins T."/>
            <person name="Plengvidhya V."/>
            <person name="Welker D."/>
            <person name="Hughes J."/>
            <person name="Goh Y."/>
            <person name="Benson A."/>
            <person name="Baldwin K."/>
            <person name="Lee J.-H."/>
            <person name="Diaz-Muniz I."/>
            <person name="Dosti B."/>
            <person name="Smeianov V."/>
            <person name="Wechter W."/>
            <person name="Barabote R."/>
            <person name="Lorca G."/>
            <person name="Altermann E."/>
            <person name="Barrangou R."/>
            <person name="Ganesan B."/>
            <person name="Xie Y."/>
            <person name="Rawsthorne H."/>
            <person name="Tamir D."/>
            <person name="Parker C."/>
            <person name="Breidt F."/>
            <person name="Broadbent J.R."/>
            <person name="Hutkins R."/>
            <person name="O'Sullivan D."/>
            <person name="Steele J."/>
            <person name="Unlu G."/>
            <person name="Saier M.H. Jr."/>
            <person name="Klaenhammer T."/>
            <person name="Richardson P."/>
            <person name="Kozyavkin S."/>
            <person name="Weimer B.C."/>
            <person name="Mills D.A."/>
        </authorList>
    </citation>
    <scope>NUCLEOTIDE SEQUENCE [LARGE SCALE GENOMIC DNA]</scope>
    <source>
        <strain>ATCC 33323 / DSM 20243 / BCRC 14619 / CIP 102991 / JCM 1131 / KCTC 3163 / NCIMB 11718 / NCTC 13722 / AM63</strain>
    </source>
</reference>
<protein>
    <recommendedName>
        <fullName evidence="1">GMP reductase</fullName>
        <ecNumber evidence="1">1.7.1.7</ecNumber>
    </recommendedName>
    <alternativeName>
        <fullName evidence="1">Guanosine 5'-monophosphate oxidoreductase</fullName>
        <shortName evidence="1">Guanosine monophosphate reductase</shortName>
    </alternativeName>
</protein>
<feature type="chain" id="PRO_0000294275" description="GMP reductase">
    <location>
        <begin position="1"/>
        <end position="330"/>
    </location>
</feature>
<feature type="active site" description="Thioimidate intermediate" evidence="1">
    <location>
        <position position="180"/>
    </location>
</feature>
<feature type="binding site" evidence="1">
    <location>
        <begin position="209"/>
        <end position="232"/>
    </location>
    <ligand>
        <name>NADP(+)</name>
        <dbReference type="ChEBI" id="CHEBI:58349"/>
    </ligand>
</feature>
<name>GUAC_LACGA</name>
<comment type="function">
    <text evidence="1">Catalyzes the irreversible NADPH-dependent deamination of GMP to IMP. It functions in the conversion of nucleobase, nucleoside and nucleotide derivatives of G to A nucleotides, and in maintaining the intracellular balance of A and G nucleotides.</text>
</comment>
<comment type="catalytic activity">
    <reaction evidence="1">
        <text>IMP + NH4(+) + NADP(+) = GMP + NADPH + 2 H(+)</text>
        <dbReference type="Rhea" id="RHEA:17185"/>
        <dbReference type="ChEBI" id="CHEBI:15378"/>
        <dbReference type="ChEBI" id="CHEBI:28938"/>
        <dbReference type="ChEBI" id="CHEBI:57783"/>
        <dbReference type="ChEBI" id="CHEBI:58053"/>
        <dbReference type="ChEBI" id="CHEBI:58115"/>
        <dbReference type="ChEBI" id="CHEBI:58349"/>
        <dbReference type="EC" id="1.7.1.7"/>
    </reaction>
</comment>
<comment type="similarity">
    <text evidence="1">Belongs to the IMPDH/GMPR family. GuaC type 2 subfamily.</text>
</comment>
<evidence type="ECO:0000255" key="1">
    <source>
        <dbReference type="HAMAP-Rule" id="MF_01511"/>
    </source>
</evidence>
<gene>
    <name evidence="1" type="primary">guaC</name>
    <name type="ordered locus">LGAS_0389</name>
</gene>
<dbReference type="EC" id="1.7.1.7" evidence="1"/>
<dbReference type="EMBL" id="CP000413">
    <property type="protein sequence ID" value="ABJ59794.1"/>
    <property type="molecule type" value="Genomic_DNA"/>
</dbReference>
<dbReference type="RefSeq" id="WP_003655967.1">
    <property type="nucleotide sequence ID" value="NZ_WBMG01000001.1"/>
</dbReference>
<dbReference type="SMR" id="Q045S8"/>
<dbReference type="GeneID" id="29640052"/>
<dbReference type="KEGG" id="lga:LGAS_0389"/>
<dbReference type="HOGENOM" id="CLU_022552_5_0_9"/>
<dbReference type="BioCyc" id="LGAS324831:G1G6Y-388-MONOMER"/>
<dbReference type="Proteomes" id="UP000000664">
    <property type="component" value="Chromosome"/>
</dbReference>
<dbReference type="GO" id="GO:0005829">
    <property type="term" value="C:cytosol"/>
    <property type="evidence" value="ECO:0007669"/>
    <property type="project" value="TreeGrafter"/>
</dbReference>
<dbReference type="GO" id="GO:1902560">
    <property type="term" value="C:GMP reductase complex"/>
    <property type="evidence" value="ECO:0007669"/>
    <property type="project" value="InterPro"/>
</dbReference>
<dbReference type="GO" id="GO:0003920">
    <property type="term" value="F:GMP reductase activity"/>
    <property type="evidence" value="ECO:0007669"/>
    <property type="project" value="UniProtKB-UniRule"/>
</dbReference>
<dbReference type="GO" id="GO:0006163">
    <property type="term" value="P:purine nucleotide metabolic process"/>
    <property type="evidence" value="ECO:0007669"/>
    <property type="project" value="UniProtKB-UniRule"/>
</dbReference>
<dbReference type="CDD" id="cd00381">
    <property type="entry name" value="IMPDH"/>
    <property type="match status" value="1"/>
</dbReference>
<dbReference type="FunFam" id="3.20.20.70:FF:000424">
    <property type="entry name" value="Inosine-5'-monophosphate dehydrogenase 2"/>
    <property type="match status" value="1"/>
</dbReference>
<dbReference type="Gene3D" id="3.20.20.70">
    <property type="entry name" value="Aldolase class I"/>
    <property type="match status" value="1"/>
</dbReference>
<dbReference type="HAMAP" id="MF_01511">
    <property type="entry name" value="GMP_reduct_type2"/>
    <property type="match status" value="1"/>
</dbReference>
<dbReference type="InterPro" id="IPR013785">
    <property type="entry name" value="Aldolase_TIM"/>
</dbReference>
<dbReference type="InterPro" id="IPR050139">
    <property type="entry name" value="GMP_reductase"/>
</dbReference>
<dbReference type="InterPro" id="IPR005994">
    <property type="entry name" value="GuaC_type_2"/>
</dbReference>
<dbReference type="InterPro" id="IPR015875">
    <property type="entry name" value="IMP_DH/GMP_Rdtase_CS"/>
</dbReference>
<dbReference type="InterPro" id="IPR001093">
    <property type="entry name" value="IMP_DH_GMPRt"/>
</dbReference>
<dbReference type="NCBIfam" id="TIGR01306">
    <property type="entry name" value="GMP_reduct_2"/>
    <property type="match status" value="1"/>
</dbReference>
<dbReference type="NCBIfam" id="NF003966">
    <property type="entry name" value="PRK05458.1"/>
    <property type="match status" value="1"/>
</dbReference>
<dbReference type="PANTHER" id="PTHR43170">
    <property type="entry name" value="GMP REDUCTASE"/>
    <property type="match status" value="1"/>
</dbReference>
<dbReference type="PANTHER" id="PTHR43170:SF5">
    <property type="entry name" value="GMP REDUCTASE"/>
    <property type="match status" value="1"/>
</dbReference>
<dbReference type="Pfam" id="PF00478">
    <property type="entry name" value="IMPDH"/>
    <property type="match status" value="1"/>
</dbReference>
<dbReference type="PIRSF" id="PIRSF036500">
    <property type="entry name" value="GMP_red_Firmic"/>
    <property type="match status" value="1"/>
</dbReference>
<dbReference type="SMART" id="SM01240">
    <property type="entry name" value="IMPDH"/>
    <property type="match status" value="1"/>
</dbReference>
<dbReference type="SUPFAM" id="SSF51412">
    <property type="entry name" value="Inosine monophosphate dehydrogenase (IMPDH)"/>
    <property type="match status" value="1"/>
</dbReference>
<dbReference type="PROSITE" id="PS00487">
    <property type="entry name" value="IMP_DH_GMP_RED"/>
    <property type="match status" value="1"/>
</dbReference>
<proteinExistence type="inferred from homology"/>
<accession>Q045S8</accession>
<organism>
    <name type="scientific">Lactobacillus gasseri (strain ATCC 33323 / DSM 20243 / BCRC 14619 / CIP 102991 / JCM 1131 / KCTC 3163 / NCIMB 11718 / NCTC 13722 / AM63)</name>
    <dbReference type="NCBI Taxonomy" id="324831"/>
    <lineage>
        <taxon>Bacteria</taxon>
        <taxon>Bacillati</taxon>
        <taxon>Bacillota</taxon>
        <taxon>Bacilli</taxon>
        <taxon>Lactobacillales</taxon>
        <taxon>Lactobacillaceae</taxon>
        <taxon>Lactobacillus</taxon>
    </lineage>
</organism>
<sequence length="330" mass="36644">MSNYFSMEAFDYDDIQLVPNKCIIKSRKEADTSVKFGSRTFKIPVVPANMESVIDDDLAIWLAENGYYYVMHRFHPEKRANFIKMMHDKGLFASISVGIKDSEYDFIDYLAKEKIIPEYITIDVAHGHSDYVIKMIKYIKDKLPDTFLTAGNIATPEAVRELENAGADATKVGVGPGRACITKLKTGFGTGGWQLAALRMCSKAARKPLIADGGIRHNGDIAKSVRFGASMVMIGSLFAGHEESPGNLITIDGKRYKQYWGSASEVQKGAYRNVEGKQMLVPYRGSIKDTLREMQEDLQSSISYAGGKDLSAIRVVDYVIVKSSIFDGDK</sequence>
<keyword id="KW-0521">NADP</keyword>
<keyword id="KW-0560">Oxidoreductase</keyword>